<dbReference type="EC" id="2.1.1.-" evidence="1"/>
<dbReference type="EMBL" id="AM286690">
    <property type="protein sequence ID" value="CAL17182.1"/>
    <property type="molecule type" value="Genomic_DNA"/>
</dbReference>
<dbReference type="SMR" id="Q0VNR6"/>
<dbReference type="STRING" id="393595.ABO_1734"/>
<dbReference type="KEGG" id="abo:ABO_1734"/>
<dbReference type="eggNOG" id="COG1901">
    <property type="taxonomic scope" value="Bacteria"/>
</dbReference>
<dbReference type="HOGENOM" id="CLU_107018_0_0_6"/>
<dbReference type="OrthoDB" id="6019967at2"/>
<dbReference type="Proteomes" id="UP000008871">
    <property type="component" value="Chromosome"/>
</dbReference>
<dbReference type="GO" id="GO:0005737">
    <property type="term" value="C:cytoplasm"/>
    <property type="evidence" value="ECO:0007669"/>
    <property type="project" value="UniProtKB-SubCell"/>
</dbReference>
<dbReference type="GO" id="GO:0008757">
    <property type="term" value="F:S-adenosylmethionine-dependent methyltransferase activity"/>
    <property type="evidence" value="ECO:0007669"/>
    <property type="project" value="UniProtKB-UniRule"/>
</dbReference>
<dbReference type="GO" id="GO:0008175">
    <property type="term" value="F:tRNA methyltransferase activity"/>
    <property type="evidence" value="ECO:0007669"/>
    <property type="project" value="InterPro"/>
</dbReference>
<dbReference type="GO" id="GO:0030488">
    <property type="term" value="P:tRNA methylation"/>
    <property type="evidence" value="ECO:0007669"/>
    <property type="project" value="TreeGrafter"/>
</dbReference>
<dbReference type="CDD" id="cd18087">
    <property type="entry name" value="TrmY-like"/>
    <property type="match status" value="1"/>
</dbReference>
<dbReference type="Gene3D" id="3.40.1280.10">
    <property type="match status" value="1"/>
</dbReference>
<dbReference type="HAMAP" id="MF_00587">
    <property type="entry name" value="tRNA_methyltr_TrmY"/>
    <property type="match status" value="1"/>
</dbReference>
<dbReference type="InterPro" id="IPR029028">
    <property type="entry name" value="Alpha/beta_knot_MTases"/>
</dbReference>
<dbReference type="InterPro" id="IPR007158">
    <property type="entry name" value="TrmY"/>
</dbReference>
<dbReference type="InterPro" id="IPR029026">
    <property type="entry name" value="tRNA_m1G_MTases_N"/>
</dbReference>
<dbReference type="NCBIfam" id="NF002560">
    <property type="entry name" value="PRK02135.1"/>
    <property type="match status" value="1"/>
</dbReference>
<dbReference type="PANTHER" id="PTHR40703">
    <property type="entry name" value="TRNA (PSEUDOURIDINE(54)-N(1))-METHYLTRANSFERASE"/>
    <property type="match status" value="1"/>
</dbReference>
<dbReference type="PANTHER" id="PTHR40703:SF1">
    <property type="entry name" value="TRNA (PSEUDOURIDINE(54)-N(1))-METHYLTRANSFERASE"/>
    <property type="match status" value="1"/>
</dbReference>
<dbReference type="Pfam" id="PF04013">
    <property type="entry name" value="Methyltrn_RNA_2"/>
    <property type="match status" value="1"/>
</dbReference>
<dbReference type="SUPFAM" id="SSF75217">
    <property type="entry name" value="alpha/beta knot"/>
    <property type="match status" value="1"/>
</dbReference>
<evidence type="ECO:0000255" key="1">
    <source>
        <dbReference type="HAMAP-Rule" id="MF_00587"/>
    </source>
</evidence>
<feature type="chain" id="PRO_1000025462" description="Putative pseudouridine methyltransferase">
    <location>
        <begin position="1"/>
        <end position="200"/>
    </location>
</feature>
<feature type="binding site" evidence="1">
    <location>
        <position position="133"/>
    </location>
    <ligand>
        <name>S-adenosyl-L-methionine</name>
        <dbReference type="ChEBI" id="CHEBI:59789"/>
    </ligand>
</feature>
<feature type="binding site" evidence="1">
    <location>
        <position position="187"/>
    </location>
    <ligand>
        <name>S-adenosyl-L-methionine</name>
        <dbReference type="ChEBI" id="CHEBI:59789"/>
    </ligand>
</feature>
<sequence>MRTFVLRARAASTHSQTLLANVGGDAHSEILAHTLMNAIFVAQSHRDDVVVHLVLESTQDYSRTITFVAAEMRDIGGFHEQALLAKVVRALDASAGMGKEQMKAVESGITVRTQSFEKVVKELAEDGHQLYMMDPKGENIRELDFAQKPCFLLTDHIPMPKKSFNSLKRLGTEKISLGPTMLFASQCVVLINNELDLAGF</sequence>
<keyword id="KW-0963">Cytoplasm</keyword>
<keyword id="KW-0489">Methyltransferase</keyword>
<keyword id="KW-1185">Reference proteome</keyword>
<keyword id="KW-0949">S-adenosyl-L-methionine</keyword>
<keyword id="KW-0808">Transferase</keyword>
<proteinExistence type="inferred from homology"/>
<reference key="1">
    <citation type="journal article" date="2006" name="Nat. Biotechnol.">
        <title>Genome sequence of the ubiquitous hydrocarbon-degrading marine bacterium Alcanivorax borkumensis.</title>
        <authorList>
            <person name="Schneiker S."/>
            <person name="Martins dos Santos V.A.P."/>
            <person name="Bartels D."/>
            <person name="Bekel T."/>
            <person name="Brecht M."/>
            <person name="Buhrmester J."/>
            <person name="Chernikova T.N."/>
            <person name="Denaro R."/>
            <person name="Ferrer M."/>
            <person name="Gertler C."/>
            <person name="Goesmann A."/>
            <person name="Golyshina O.V."/>
            <person name="Kaminski F."/>
            <person name="Khachane A.N."/>
            <person name="Lang S."/>
            <person name="Linke B."/>
            <person name="McHardy A.C."/>
            <person name="Meyer F."/>
            <person name="Nechitaylo T."/>
            <person name="Puehler A."/>
            <person name="Regenhardt D."/>
            <person name="Rupp O."/>
            <person name="Sabirova J.S."/>
            <person name="Selbitschka W."/>
            <person name="Yakimov M.M."/>
            <person name="Timmis K.N."/>
            <person name="Vorhoelter F.-J."/>
            <person name="Weidner S."/>
            <person name="Kaiser O."/>
            <person name="Golyshin P.N."/>
        </authorList>
    </citation>
    <scope>NUCLEOTIDE SEQUENCE [LARGE SCALE GENOMIC DNA]</scope>
    <source>
        <strain>ATCC 700651 / DSM 11573 / NCIMB 13689 / SK2</strain>
    </source>
</reference>
<protein>
    <recommendedName>
        <fullName evidence="1">Putative pseudouridine methyltransferase</fullName>
        <ecNumber evidence="1">2.1.1.-</ecNumber>
    </recommendedName>
</protein>
<name>TRMYL_ALCBS</name>
<accession>Q0VNR6</accession>
<comment type="subcellular location">
    <subcellularLocation>
        <location evidence="1">Cytoplasm</location>
    </subcellularLocation>
</comment>
<comment type="similarity">
    <text evidence="1">Belongs to the methyltransferase superfamily. TrmY family.</text>
</comment>
<gene>
    <name type="ordered locus">ABO_1734</name>
</gene>
<organism>
    <name type="scientific">Alcanivorax borkumensis (strain ATCC 700651 / DSM 11573 / NCIMB 13689 / SK2)</name>
    <dbReference type="NCBI Taxonomy" id="393595"/>
    <lineage>
        <taxon>Bacteria</taxon>
        <taxon>Pseudomonadati</taxon>
        <taxon>Pseudomonadota</taxon>
        <taxon>Gammaproteobacteria</taxon>
        <taxon>Oceanospirillales</taxon>
        <taxon>Alcanivoracaceae</taxon>
        <taxon>Alcanivorax</taxon>
    </lineage>
</organism>